<gene>
    <name type="primary">sdhB</name>
    <name type="ordered locus">CBU_1400</name>
</gene>
<proteinExistence type="inferred from homology"/>
<evidence type="ECO:0000250" key="1"/>
<evidence type="ECO:0000255" key="2">
    <source>
        <dbReference type="PROSITE-ProRule" id="PRU00711"/>
    </source>
</evidence>
<evidence type="ECO:0000305" key="3"/>
<comment type="catalytic activity">
    <reaction>
        <text>a quinone + succinate = fumarate + a quinol</text>
        <dbReference type="Rhea" id="RHEA:40523"/>
        <dbReference type="ChEBI" id="CHEBI:24646"/>
        <dbReference type="ChEBI" id="CHEBI:29806"/>
        <dbReference type="ChEBI" id="CHEBI:30031"/>
        <dbReference type="ChEBI" id="CHEBI:132124"/>
        <dbReference type="EC" id="1.3.5.1"/>
    </reaction>
</comment>
<comment type="cofactor">
    <cofactor>
        <name>[2Fe-2S] cluster</name>
        <dbReference type="ChEBI" id="CHEBI:190135"/>
    </cofactor>
    <text>Binds 1 [2Fe-2S] cluster.</text>
</comment>
<comment type="cofactor">
    <cofactor>
        <name>[3Fe-4S] cluster</name>
        <dbReference type="ChEBI" id="CHEBI:21137"/>
    </cofactor>
    <text>Binds 1 [3Fe-4S] cluster.</text>
</comment>
<comment type="cofactor">
    <cofactor>
        <name>[4Fe-4S] cluster</name>
        <dbReference type="ChEBI" id="CHEBI:49883"/>
    </cofactor>
    <text>Binds 1 [4Fe-4S] cluster.</text>
</comment>
<comment type="pathway">
    <text>Carbohydrate metabolism; tricarboxylic acid cycle; fumarate from succinate (bacterial route): step 1/1.</text>
</comment>
<comment type="subunit">
    <text>Part of an enzyme complex containing four subunits: a flavoprotein, an iron-sulfur protein, cytochrome b-556 and a hydrophobic protein.</text>
</comment>
<comment type="similarity">
    <text evidence="3">Belongs to the succinate dehydrogenase/fumarate reductase iron-sulfur protein family.</text>
</comment>
<comment type="sequence caution" evidence="3">
    <conflict type="erroneous initiation">
        <sequence resource="EMBL-CDS" id="AAO90899"/>
    </conflict>
</comment>
<comment type="sequence caution" evidence="3">
    <conflict type="erroneous initiation">
        <sequence resource="EMBL-CDS" id="CAA54873"/>
    </conflict>
</comment>
<feature type="chain" id="PRO_0000158687" description="Succinate dehydrogenase iron-sulfur subunit">
    <location>
        <begin position="1"/>
        <end position="235"/>
    </location>
</feature>
<feature type="domain" description="4Fe-4S ferredoxin-type" evidence="2">
    <location>
        <begin position="133"/>
        <end position="163"/>
    </location>
</feature>
<feature type="binding site" evidence="1">
    <location>
        <position position="53"/>
    </location>
    <ligand>
        <name>[2Fe-2S] cluster</name>
        <dbReference type="ChEBI" id="CHEBI:190135"/>
    </ligand>
</feature>
<feature type="binding site" evidence="1">
    <location>
        <position position="58"/>
    </location>
    <ligand>
        <name>[2Fe-2S] cluster</name>
        <dbReference type="ChEBI" id="CHEBI:190135"/>
    </ligand>
</feature>
<feature type="binding site" evidence="1">
    <location>
        <position position="73"/>
    </location>
    <ligand>
        <name>[2Fe-2S] cluster</name>
        <dbReference type="ChEBI" id="CHEBI:190135"/>
    </ligand>
</feature>
<feature type="binding site" evidence="1">
    <location>
        <position position="143"/>
    </location>
    <ligand>
        <name>[4Fe-4S] cluster</name>
        <dbReference type="ChEBI" id="CHEBI:49883"/>
    </ligand>
</feature>
<feature type="binding site" evidence="1">
    <location>
        <position position="146"/>
    </location>
    <ligand>
        <name>[4Fe-4S] cluster</name>
        <dbReference type="ChEBI" id="CHEBI:49883"/>
    </ligand>
</feature>
<feature type="binding site" evidence="1">
    <location>
        <position position="149"/>
    </location>
    <ligand>
        <name>[4Fe-4S] cluster</name>
        <dbReference type="ChEBI" id="CHEBI:49883"/>
    </ligand>
</feature>
<feature type="binding site" evidence="1">
    <location>
        <position position="153"/>
    </location>
    <ligand>
        <name>[3Fe-4S] cluster</name>
        <dbReference type="ChEBI" id="CHEBI:21137"/>
    </ligand>
</feature>
<feature type="binding site" evidence="1">
    <location>
        <position position="158"/>
    </location>
    <ligand>
        <name>a ubiquinone</name>
        <dbReference type="ChEBI" id="CHEBI:16389"/>
        <note>ligand shared with SdhD subunit</note>
    </ligand>
</feature>
<feature type="binding site" evidence="1">
    <location>
        <position position="200"/>
    </location>
    <ligand>
        <name>[3Fe-4S] cluster</name>
        <dbReference type="ChEBI" id="CHEBI:21137"/>
    </ligand>
</feature>
<feature type="binding site" evidence="1">
    <location>
        <position position="206"/>
    </location>
    <ligand>
        <name>[3Fe-4S] cluster</name>
        <dbReference type="ChEBI" id="CHEBI:21137"/>
    </ligand>
</feature>
<feature type="binding site" evidence="1">
    <location>
        <position position="210"/>
    </location>
    <ligand>
        <name>[4Fe-4S] cluster</name>
        <dbReference type="ChEBI" id="CHEBI:49883"/>
    </ligand>
</feature>
<accession>P51053</accession>
<keyword id="KW-0001">2Fe-2S</keyword>
<keyword id="KW-0003">3Fe-4S</keyword>
<keyword id="KW-0004">4Fe-4S</keyword>
<keyword id="KW-0249">Electron transport</keyword>
<keyword id="KW-0408">Iron</keyword>
<keyword id="KW-0411">Iron-sulfur</keyword>
<keyword id="KW-0479">Metal-binding</keyword>
<keyword id="KW-0560">Oxidoreductase</keyword>
<keyword id="KW-1185">Reference proteome</keyword>
<keyword id="KW-0813">Transport</keyword>
<keyword id="KW-0816">Tricarboxylic acid cycle</keyword>
<name>SDHB_COXBU</name>
<dbReference type="EC" id="1.3.5.1"/>
<dbReference type="EMBL" id="L33409">
    <property type="protein sequence ID" value="AAA74134.1"/>
    <property type="molecule type" value="Genomic_DNA"/>
</dbReference>
<dbReference type="EMBL" id="X77919">
    <property type="protein sequence ID" value="CAA54873.1"/>
    <property type="status" value="ALT_INIT"/>
    <property type="molecule type" value="Genomic_DNA"/>
</dbReference>
<dbReference type="EMBL" id="AE016828">
    <property type="protein sequence ID" value="AAO90899.1"/>
    <property type="status" value="ALT_INIT"/>
    <property type="molecule type" value="Genomic_DNA"/>
</dbReference>
<dbReference type="PIR" id="S42873">
    <property type="entry name" value="S42873"/>
</dbReference>
<dbReference type="RefSeq" id="NP_820385.1">
    <property type="nucleotide sequence ID" value="NC_002971.3"/>
</dbReference>
<dbReference type="RefSeq" id="WP_005771712.1">
    <property type="nucleotide sequence ID" value="NZ_CCYB01000027.1"/>
</dbReference>
<dbReference type="SMR" id="P51053"/>
<dbReference type="STRING" id="227377.CBU_1400"/>
<dbReference type="DNASU" id="1209306"/>
<dbReference type="EnsemblBacteria" id="AAO90899">
    <property type="protein sequence ID" value="AAO90899"/>
    <property type="gene ID" value="CBU_1400"/>
</dbReference>
<dbReference type="GeneID" id="1209306"/>
<dbReference type="KEGG" id="cbu:CBU_1400"/>
<dbReference type="PATRIC" id="fig|227377.7.peg.1402"/>
<dbReference type="eggNOG" id="COG0479">
    <property type="taxonomic scope" value="Bacteria"/>
</dbReference>
<dbReference type="HOGENOM" id="CLU_044838_0_2_6"/>
<dbReference type="OrthoDB" id="9804391at2"/>
<dbReference type="UniPathway" id="UPA00223">
    <property type="reaction ID" value="UER01005"/>
</dbReference>
<dbReference type="Proteomes" id="UP000002671">
    <property type="component" value="Chromosome"/>
</dbReference>
<dbReference type="GO" id="GO:0051537">
    <property type="term" value="F:2 iron, 2 sulfur cluster binding"/>
    <property type="evidence" value="ECO:0007669"/>
    <property type="project" value="UniProtKB-KW"/>
</dbReference>
<dbReference type="GO" id="GO:0051538">
    <property type="term" value="F:3 iron, 4 sulfur cluster binding"/>
    <property type="evidence" value="ECO:0007669"/>
    <property type="project" value="UniProtKB-KW"/>
</dbReference>
<dbReference type="GO" id="GO:0051539">
    <property type="term" value="F:4 iron, 4 sulfur cluster binding"/>
    <property type="evidence" value="ECO:0007669"/>
    <property type="project" value="UniProtKB-KW"/>
</dbReference>
<dbReference type="GO" id="GO:0009055">
    <property type="term" value="F:electron transfer activity"/>
    <property type="evidence" value="ECO:0007669"/>
    <property type="project" value="InterPro"/>
</dbReference>
<dbReference type="GO" id="GO:0046872">
    <property type="term" value="F:metal ion binding"/>
    <property type="evidence" value="ECO:0007669"/>
    <property type="project" value="UniProtKB-KW"/>
</dbReference>
<dbReference type="GO" id="GO:0008177">
    <property type="term" value="F:succinate dehydrogenase (quinone) activity"/>
    <property type="evidence" value="ECO:0007669"/>
    <property type="project" value="UniProtKB-EC"/>
</dbReference>
<dbReference type="GO" id="GO:0009060">
    <property type="term" value="P:aerobic respiration"/>
    <property type="evidence" value="ECO:0000318"/>
    <property type="project" value="GO_Central"/>
</dbReference>
<dbReference type="GO" id="GO:0022904">
    <property type="term" value="P:respiratory electron transport chain"/>
    <property type="evidence" value="ECO:0000318"/>
    <property type="project" value="GO_Central"/>
</dbReference>
<dbReference type="GO" id="GO:0006099">
    <property type="term" value="P:tricarboxylic acid cycle"/>
    <property type="evidence" value="ECO:0007669"/>
    <property type="project" value="UniProtKB-UniPathway"/>
</dbReference>
<dbReference type="CDD" id="cd00207">
    <property type="entry name" value="fer2"/>
    <property type="match status" value="1"/>
</dbReference>
<dbReference type="FunFam" id="1.10.1060.10:FF:000001">
    <property type="entry name" value="Succinate dehydrogenase iron-sulfur subunit SdhB"/>
    <property type="match status" value="1"/>
</dbReference>
<dbReference type="Gene3D" id="3.10.20.30">
    <property type="match status" value="1"/>
</dbReference>
<dbReference type="Gene3D" id="1.10.1060.10">
    <property type="entry name" value="Alpha-helical ferredoxin"/>
    <property type="match status" value="1"/>
</dbReference>
<dbReference type="InterPro" id="IPR036010">
    <property type="entry name" value="2Fe-2S_ferredoxin-like_sf"/>
</dbReference>
<dbReference type="InterPro" id="IPR001041">
    <property type="entry name" value="2Fe-2S_ferredoxin-type"/>
</dbReference>
<dbReference type="InterPro" id="IPR017896">
    <property type="entry name" value="4Fe4S_Fe-S-bd"/>
</dbReference>
<dbReference type="InterPro" id="IPR017900">
    <property type="entry name" value="4Fe4S_Fe_S_CS"/>
</dbReference>
<dbReference type="InterPro" id="IPR012675">
    <property type="entry name" value="Beta-grasp_dom_sf"/>
</dbReference>
<dbReference type="InterPro" id="IPR009051">
    <property type="entry name" value="Helical_ferredxn"/>
</dbReference>
<dbReference type="InterPro" id="IPR050573">
    <property type="entry name" value="SDH/FRD_Iron-Sulfur"/>
</dbReference>
<dbReference type="InterPro" id="IPR004489">
    <property type="entry name" value="Succ_DH/fum_Rdtase_Fe-S"/>
</dbReference>
<dbReference type="InterPro" id="IPR025192">
    <property type="entry name" value="Succ_DH/fum_Rdtase_N"/>
</dbReference>
<dbReference type="NCBIfam" id="TIGR00384">
    <property type="entry name" value="dhsB"/>
    <property type="match status" value="1"/>
</dbReference>
<dbReference type="NCBIfam" id="NF004616">
    <property type="entry name" value="PRK05950.1"/>
    <property type="match status" value="1"/>
</dbReference>
<dbReference type="PANTHER" id="PTHR11921:SF29">
    <property type="entry name" value="SUCCINATE DEHYDROGENASE [UBIQUINONE] IRON-SULFUR SUBUNIT, MITOCHONDRIAL"/>
    <property type="match status" value="1"/>
</dbReference>
<dbReference type="PANTHER" id="PTHR11921">
    <property type="entry name" value="SUCCINATE DEHYDROGENASE IRON-SULFUR PROTEIN"/>
    <property type="match status" value="1"/>
</dbReference>
<dbReference type="Pfam" id="PF13085">
    <property type="entry name" value="Fer2_3"/>
    <property type="match status" value="1"/>
</dbReference>
<dbReference type="Pfam" id="PF13534">
    <property type="entry name" value="Fer4_17"/>
    <property type="match status" value="1"/>
</dbReference>
<dbReference type="SUPFAM" id="SSF54292">
    <property type="entry name" value="2Fe-2S ferredoxin-like"/>
    <property type="match status" value="1"/>
</dbReference>
<dbReference type="SUPFAM" id="SSF46548">
    <property type="entry name" value="alpha-helical ferredoxin"/>
    <property type="match status" value="1"/>
</dbReference>
<dbReference type="PROSITE" id="PS00198">
    <property type="entry name" value="4FE4S_FER_1"/>
    <property type="match status" value="1"/>
</dbReference>
<dbReference type="PROSITE" id="PS51379">
    <property type="entry name" value="4FE4S_FER_2"/>
    <property type="match status" value="1"/>
</dbReference>
<protein>
    <recommendedName>
        <fullName>Succinate dehydrogenase iron-sulfur subunit</fullName>
        <ecNumber>1.3.5.1</ecNumber>
    </recommendedName>
</protein>
<sequence length="235" mass="26847">MTFSIMRFNPETDKKPYMQDFELDVSAIQGKMLLNALEALREKHPDIGLRRSCAEGVCGSDGMNINGKNALACVTQLKDLPDRVVVRPLPGFPIIRDLIVDMEQFYAQYKKVKPYLLNDQEAPQKERLQSPEERAKLDGLYECILCACCSSSCPSYWWNPDKFIGPAGLLWSYRFIADSRDSKEKERLDAMKDPYSVFRCRTIMDCATVCPKNLNPAKAIRKIRTEMLQETESGE</sequence>
<organism>
    <name type="scientific">Coxiella burnetii (strain RSA 493 / Nine Mile phase I)</name>
    <dbReference type="NCBI Taxonomy" id="227377"/>
    <lineage>
        <taxon>Bacteria</taxon>
        <taxon>Pseudomonadati</taxon>
        <taxon>Pseudomonadota</taxon>
        <taxon>Gammaproteobacteria</taxon>
        <taxon>Legionellales</taxon>
        <taxon>Coxiellaceae</taxon>
        <taxon>Coxiella</taxon>
    </lineage>
</organism>
<reference key="1">
    <citation type="journal article" date="1995" name="Gene">
        <title>Characterization of the succinate dehydrogenase-encoding gene cluster (sdh) from the rickettsia Coxiella burnetii.</title>
        <authorList>
            <person name="Heinzen R.A."/>
            <person name="Mo Y.-Y."/>
            <person name="Robertson S.J."/>
            <person name="Mallavia L.P."/>
        </authorList>
    </citation>
    <scope>NUCLEOTIDE SEQUENCE [GENOMIC DNA]</scope>
    <source>
        <strain>Nine Mile</strain>
    </source>
</reference>
<reference key="2">
    <citation type="submission" date="1994-03" db="EMBL/GenBank/DDBJ databases">
        <authorList>
            <person name="Thiele D."/>
            <person name="Willems H."/>
            <person name="Oswald W."/>
            <person name="Krauss H."/>
        </authorList>
    </citation>
    <scope>NUCLEOTIDE SEQUENCE [GENOMIC DNA]</scope>
    <source>
        <strain>Nine Mile</strain>
    </source>
</reference>
<reference key="3">
    <citation type="journal article" date="2003" name="Proc. Natl. Acad. Sci. U.S.A.">
        <title>Complete genome sequence of the Q-fever pathogen, Coxiella burnetii.</title>
        <authorList>
            <person name="Seshadri R."/>
            <person name="Paulsen I.T."/>
            <person name="Eisen J.A."/>
            <person name="Read T.D."/>
            <person name="Nelson K.E."/>
            <person name="Nelson W.C."/>
            <person name="Ward N.L."/>
            <person name="Tettelin H."/>
            <person name="Davidsen T.M."/>
            <person name="Beanan M.J."/>
            <person name="DeBoy R.T."/>
            <person name="Daugherty S.C."/>
            <person name="Brinkac L.M."/>
            <person name="Madupu R."/>
            <person name="Dodson R.J."/>
            <person name="Khouri H.M."/>
            <person name="Lee K.H."/>
            <person name="Carty H.A."/>
            <person name="Scanlan D."/>
            <person name="Heinzen R.A."/>
            <person name="Thompson H.A."/>
            <person name="Samuel J.E."/>
            <person name="Fraser C.M."/>
            <person name="Heidelberg J.F."/>
        </authorList>
    </citation>
    <scope>NUCLEOTIDE SEQUENCE [LARGE SCALE GENOMIC DNA]</scope>
    <source>
        <strain>RSA 493 / Nine Mile phase I</strain>
    </source>
</reference>